<proteinExistence type="inferred from homology"/>
<comment type="function">
    <text evidence="1">Involved in the third step of the chorismate pathway, which leads to the biosynthesis of aromatic amino acids. Catalyzes the cis-dehydration of 3-dehydroquinate (DHQ) and introduces the first double bond of the aromatic ring to yield 3-dehydroshikimate.</text>
</comment>
<comment type="catalytic activity">
    <reaction evidence="1">
        <text>3-dehydroquinate = 3-dehydroshikimate + H2O</text>
        <dbReference type="Rhea" id="RHEA:21096"/>
        <dbReference type="ChEBI" id="CHEBI:15377"/>
        <dbReference type="ChEBI" id="CHEBI:16630"/>
        <dbReference type="ChEBI" id="CHEBI:32364"/>
        <dbReference type="EC" id="4.2.1.10"/>
    </reaction>
</comment>
<comment type="pathway">
    <text evidence="1">Metabolic intermediate biosynthesis; chorismate biosynthesis; chorismate from D-erythrose 4-phosphate and phosphoenolpyruvate: step 3/7.</text>
</comment>
<comment type="subunit">
    <text evidence="1">Homodimer.</text>
</comment>
<comment type="similarity">
    <text evidence="1">Belongs to the type-I 3-dehydroquinase family.</text>
</comment>
<feature type="chain" id="PRO_1000099923" description="3-dehydroquinate dehydratase">
    <location>
        <begin position="1"/>
        <end position="228"/>
    </location>
</feature>
<feature type="active site" description="Proton donor/acceptor" evidence="1">
    <location>
        <position position="118"/>
    </location>
</feature>
<feature type="active site" description="Schiff-base intermediate with substrate" evidence="1">
    <location>
        <position position="143"/>
    </location>
</feature>
<feature type="binding site" evidence="1">
    <location>
        <begin position="30"/>
        <end position="32"/>
    </location>
    <ligand>
        <name>3-dehydroquinate</name>
        <dbReference type="ChEBI" id="CHEBI:32364"/>
    </ligand>
</feature>
<feature type="binding site" evidence="1">
    <location>
        <position position="62"/>
    </location>
    <ligand>
        <name>3-dehydroquinate</name>
        <dbReference type="ChEBI" id="CHEBI:32364"/>
    </ligand>
</feature>
<feature type="binding site" evidence="1">
    <location>
        <position position="186"/>
    </location>
    <ligand>
        <name>3-dehydroquinate</name>
        <dbReference type="ChEBI" id="CHEBI:32364"/>
    </ligand>
</feature>
<feature type="binding site" evidence="1">
    <location>
        <position position="205"/>
    </location>
    <ligand>
        <name>3-dehydroquinate</name>
        <dbReference type="ChEBI" id="CHEBI:32364"/>
    </ligand>
</feature>
<feature type="binding site" evidence="1">
    <location>
        <position position="209"/>
    </location>
    <ligand>
        <name>3-dehydroquinate</name>
        <dbReference type="ChEBI" id="CHEBI:32364"/>
    </ligand>
</feature>
<dbReference type="EC" id="4.2.1.10" evidence="1"/>
<dbReference type="EMBL" id="CP000829">
    <property type="protein sequence ID" value="ACI60955.1"/>
    <property type="molecule type" value="Genomic_DNA"/>
</dbReference>
<dbReference type="SMR" id="B5XKU3"/>
<dbReference type="KEGG" id="soz:Spy49_0634"/>
<dbReference type="HOGENOM" id="CLU_064444_0_0_9"/>
<dbReference type="UniPathway" id="UPA00053">
    <property type="reaction ID" value="UER00086"/>
</dbReference>
<dbReference type="Proteomes" id="UP000001039">
    <property type="component" value="Chromosome"/>
</dbReference>
<dbReference type="GO" id="GO:0003855">
    <property type="term" value="F:3-dehydroquinate dehydratase activity"/>
    <property type="evidence" value="ECO:0007669"/>
    <property type="project" value="UniProtKB-UniRule"/>
</dbReference>
<dbReference type="GO" id="GO:0046279">
    <property type="term" value="P:3,4-dihydroxybenzoate biosynthetic process"/>
    <property type="evidence" value="ECO:0007669"/>
    <property type="project" value="UniProtKB-ARBA"/>
</dbReference>
<dbReference type="GO" id="GO:0008652">
    <property type="term" value="P:amino acid biosynthetic process"/>
    <property type="evidence" value="ECO:0007669"/>
    <property type="project" value="UniProtKB-KW"/>
</dbReference>
<dbReference type="GO" id="GO:0009073">
    <property type="term" value="P:aromatic amino acid family biosynthetic process"/>
    <property type="evidence" value="ECO:0007669"/>
    <property type="project" value="UniProtKB-KW"/>
</dbReference>
<dbReference type="GO" id="GO:0009423">
    <property type="term" value="P:chorismate biosynthetic process"/>
    <property type="evidence" value="ECO:0007669"/>
    <property type="project" value="UniProtKB-UniRule"/>
</dbReference>
<dbReference type="CDD" id="cd00502">
    <property type="entry name" value="DHQase_I"/>
    <property type="match status" value="1"/>
</dbReference>
<dbReference type="Gene3D" id="3.20.20.70">
    <property type="entry name" value="Aldolase class I"/>
    <property type="match status" value="1"/>
</dbReference>
<dbReference type="HAMAP" id="MF_00214">
    <property type="entry name" value="AroD"/>
    <property type="match status" value="1"/>
</dbReference>
<dbReference type="InterPro" id="IPR013785">
    <property type="entry name" value="Aldolase_TIM"/>
</dbReference>
<dbReference type="InterPro" id="IPR001381">
    <property type="entry name" value="DHquinase_I"/>
</dbReference>
<dbReference type="InterPro" id="IPR050146">
    <property type="entry name" value="Type-I_3-dehydroquinase"/>
</dbReference>
<dbReference type="NCBIfam" id="TIGR01093">
    <property type="entry name" value="aroD"/>
    <property type="match status" value="1"/>
</dbReference>
<dbReference type="PANTHER" id="PTHR43699">
    <property type="entry name" value="3-DEHYDROQUINATE DEHYDRATASE"/>
    <property type="match status" value="1"/>
</dbReference>
<dbReference type="PANTHER" id="PTHR43699:SF1">
    <property type="entry name" value="3-DEHYDROQUINATE DEHYDRATASE"/>
    <property type="match status" value="1"/>
</dbReference>
<dbReference type="Pfam" id="PF01487">
    <property type="entry name" value="DHquinase_I"/>
    <property type="match status" value="1"/>
</dbReference>
<dbReference type="SUPFAM" id="SSF51569">
    <property type="entry name" value="Aldolase"/>
    <property type="match status" value="1"/>
</dbReference>
<organism>
    <name type="scientific">Streptococcus pyogenes serotype M49 (strain NZ131)</name>
    <dbReference type="NCBI Taxonomy" id="471876"/>
    <lineage>
        <taxon>Bacteria</taxon>
        <taxon>Bacillati</taxon>
        <taxon>Bacillota</taxon>
        <taxon>Bacilli</taxon>
        <taxon>Lactobacillales</taxon>
        <taxon>Streptococcaceae</taxon>
        <taxon>Streptococcus</taxon>
    </lineage>
</organism>
<keyword id="KW-0028">Amino-acid biosynthesis</keyword>
<keyword id="KW-0057">Aromatic amino acid biosynthesis</keyword>
<keyword id="KW-0456">Lyase</keyword>
<keyword id="KW-0704">Schiff base</keyword>
<gene>
    <name evidence="1" type="primary">aroD</name>
    <name type="ordered locus">Spy49_0634</name>
</gene>
<sequence length="228" mass="26101">MRIVAPVMPRHFDEAQAIDISKYEDVNLIEWRADFLPKDEIVAVAPAIFEKFAGKEIIFTLRTVQEGGNITLSSQEYVDIIKEINAIYNPDYIDFEYFTHKSVFQEMLDFPNLILSYHNFEETPENLMEAFSEMTKLAPRVVKIAVMPQSEQDVLDLMNYTRGFKTLNPEQEFATISMGKLGRLSRFAGDVIGSSWTYVSLDHVSGPGQVTLNDMKRIIEVLEMDISN</sequence>
<name>AROD_STRPZ</name>
<accession>B5XKU3</accession>
<evidence type="ECO:0000255" key="1">
    <source>
        <dbReference type="HAMAP-Rule" id="MF_00214"/>
    </source>
</evidence>
<protein>
    <recommendedName>
        <fullName evidence="1">3-dehydroquinate dehydratase</fullName>
        <shortName evidence="1">3-dehydroquinase</shortName>
        <ecNumber evidence="1">4.2.1.10</ecNumber>
    </recommendedName>
    <alternativeName>
        <fullName evidence="1">Type I DHQase</fullName>
    </alternativeName>
    <alternativeName>
        <fullName evidence="1">Type I dehydroquinase</fullName>
        <shortName evidence="1">DHQ1</shortName>
    </alternativeName>
</protein>
<reference key="1">
    <citation type="journal article" date="2008" name="J. Bacteriol.">
        <title>Genome sequence of a nephritogenic and highly transformable M49 strain of Streptococcus pyogenes.</title>
        <authorList>
            <person name="McShan W.M."/>
            <person name="Ferretti J.J."/>
            <person name="Karasawa T."/>
            <person name="Suvorov A.N."/>
            <person name="Lin S."/>
            <person name="Qin B."/>
            <person name="Jia H."/>
            <person name="Kenton S."/>
            <person name="Najar F."/>
            <person name="Wu H."/>
            <person name="Scott J."/>
            <person name="Roe B.A."/>
            <person name="Savic D.J."/>
        </authorList>
    </citation>
    <scope>NUCLEOTIDE SEQUENCE [LARGE SCALE GENOMIC DNA]</scope>
    <source>
        <strain>NZ131</strain>
    </source>
</reference>